<accession>Q0RRP8</accession>
<sequence>MPKKDGAIEIEGRVVEPLPNAMFRVELQNGHRVLAHISGKMRQHYIRILPEDRVVVELSPYDLSRGRIVYRYK</sequence>
<gene>
    <name evidence="1" type="primary">infA</name>
    <name type="ordered locus">FRAAL1105</name>
</gene>
<dbReference type="EMBL" id="CT573213">
    <property type="protein sequence ID" value="CAJ59769.1"/>
    <property type="molecule type" value="Genomic_DNA"/>
</dbReference>
<dbReference type="RefSeq" id="WP_006541558.1">
    <property type="nucleotide sequence ID" value="NC_008278.1"/>
</dbReference>
<dbReference type="SMR" id="Q0RRP8"/>
<dbReference type="STRING" id="326424.FRAAL1105"/>
<dbReference type="KEGG" id="fal:FRAAL1105"/>
<dbReference type="eggNOG" id="COG0361">
    <property type="taxonomic scope" value="Bacteria"/>
</dbReference>
<dbReference type="HOGENOM" id="CLU_151267_1_0_11"/>
<dbReference type="OrthoDB" id="9803250at2"/>
<dbReference type="Proteomes" id="UP000000657">
    <property type="component" value="Chromosome"/>
</dbReference>
<dbReference type="GO" id="GO:0005829">
    <property type="term" value="C:cytosol"/>
    <property type="evidence" value="ECO:0007669"/>
    <property type="project" value="TreeGrafter"/>
</dbReference>
<dbReference type="GO" id="GO:0043022">
    <property type="term" value="F:ribosome binding"/>
    <property type="evidence" value="ECO:0007669"/>
    <property type="project" value="UniProtKB-UniRule"/>
</dbReference>
<dbReference type="GO" id="GO:0019843">
    <property type="term" value="F:rRNA binding"/>
    <property type="evidence" value="ECO:0007669"/>
    <property type="project" value="UniProtKB-UniRule"/>
</dbReference>
<dbReference type="GO" id="GO:0003743">
    <property type="term" value="F:translation initiation factor activity"/>
    <property type="evidence" value="ECO:0007669"/>
    <property type="project" value="UniProtKB-UniRule"/>
</dbReference>
<dbReference type="CDD" id="cd04451">
    <property type="entry name" value="S1_IF1"/>
    <property type="match status" value="1"/>
</dbReference>
<dbReference type="FunFam" id="2.40.50.140:FF:000002">
    <property type="entry name" value="Translation initiation factor IF-1"/>
    <property type="match status" value="1"/>
</dbReference>
<dbReference type="Gene3D" id="2.40.50.140">
    <property type="entry name" value="Nucleic acid-binding proteins"/>
    <property type="match status" value="1"/>
</dbReference>
<dbReference type="HAMAP" id="MF_00075">
    <property type="entry name" value="IF_1"/>
    <property type="match status" value="1"/>
</dbReference>
<dbReference type="InterPro" id="IPR012340">
    <property type="entry name" value="NA-bd_OB-fold"/>
</dbReference>
<dbReference type="InterPro" id="IPR006196">
    <property type="entry name" value="RNA-binding_domain_S1_IF1"/>
</dbReference>
<dbReference type="InterPro" id="IPR004368">
    <property type="entry name" value="TIF_IF1"/>
</dbReference>
<dbReference type="NCBIfam" id="TIGR00008">
    <property type="entry name" value="infA"/>
    <property type="match status" value="1"/>
</dbReference>
<dbReference type="PANTHER" id="PTHR33370">
    <property type="entry name" value="TRANSLATION INITIATION FACTOR IF-1, CHLOROPLASTIC"/>
    <property type="match status" value="1"/>
</dbReference>
<dbReference type="PANTHER" id="PTHR33370:SF1">
    <property type="entry name" value="TRANSLATION INITIATION FACTOR IF-1, CHLOROPLASTIC"/>
    <property type="match status" value="1"/>
</dbReference>
<dbReference type="Pfam" id="PF01176">
    <property type="entry name" value="eIF-1a"/>
    <property type="match status" value="1"/>
</dbReference>
<dbReference type="SUPFAM" id="SSF50249">
    <property type="entry name" value="Nucleic acid-binding proteins"/>
    <property type="match status" value="1"/>
</dbReference>
<dbReference type="PROSITE" id="PS50832">
    <property type="entry name" value="S1_IF1_TYPE"/>
    <property type="match status" value="1"/>
</dbReference>
<evidence type="ECO:0000255" key="1">
    <source>
        <dbReference type="HAMAP-Rule" id="MF_00075"/>
    </source>
</evidence>
<comment type="function">
    <text evidence="1">One of the essential components for the initiation of protein synthesis. Stabilizes the binding of IF-2 and IF-3 on the 30S subunit to which N-formylmethionyl-tRNA(fMet) subsequently binds. Helps modulate mRNA selection, yielding the 30S pre-initiation complex (PIC). Upon addition of the 50S ribosomal subunit IF-1, IF-2 and IF-3 are released leaving the mature 70S translation initiation complex.</text>
</comment>
<comment type="subunit">
    <text evidence="1">Component of the 30S ribosomal translation pre-initiation complex which assembles on the 30S ribosome in the order IF-2 and IF-3, IF-1 and N-formylmethionyl-tRNA(fMet); mRNA recruitment can occur at any time during PIC assembly.</text>
</comment>
<comment type="subcellular location">
    <subcellularLocation>
        <location evidence="1">Cytoplasm</location>
    </subcellularLocation>
</comment>
<comment type="similarity">
    <text evidence="1">Belongs to the IF-1 family.</text>
</comment>
<proteinExistence type="inferred from homology"/>
<name>IF1_FRAAA</name>
<feature type="chain" id="PRO_0000338830" description="Translation initiation factor IF-1">
    <location>
        <begin position="1"/>
        <end position="73"/>
    </location>
</feature>
<feature type="domain" description="S1-like" evidence="1">
    <location>
        <begin position="1"/>
        <end position="73"/>
    </location>
</feature>
<keyword id="KW-0963">Cytoplasm</keyword>
<keyword id="KW-0396">Initiation factor</keyword>
<keyword id="KW-0648">Protein biosynthesis</keyword>
<keyword id="KW-1185">Reference proteome</keyword>
<keyword id="KW-0694">RNA-binding</keyword>
<keyword id="KW-0699">rRNA-binding</keyword>
<organism>
    <name type="scientific">Frankia alni (strain DSM 45986 / CECT 9034 / ACN14a)</name>
    <dbReference type="NCBI Taxonomy" id="326424"/>
    <lineage>
        <taxon>Bacteria</taxon>
        <taxon>Bacillati</taxon>
        <taxon>Actinomycetota</taxon>
        <taxon>Actinomycetes</taxon>
        <taxon>Frankiales</taxon>
        <taxon>Frankiaceae</taxon>
        <taxon>Frankia</taxon>
    </lineage>
</organism>
<reference key="1">
    <citation type="journal article" date="2007" name="Genome Res.">
        <title>Genome characteristics of facultatively symbiotic Frankia sp. strains reflect host range and host plant biogeography.</title>
        <authorList>
            <person name="Normand P."/>
            <person name="Lapierre P."/>
            <person name="Tisa L.S."/>
            <person name="Gogarten J.P."/>
            <person name="Alloisio N."/>
            <person name="Bagnarol E."/>
            <person name="Bassi C.A."/>
            <person name="Berry A.M."/>
            <person name="Bickhart D.M."/>
            <person name="Choisne N."/>
            <person name="Couloux A."/>
            <person name="Cournoyer B."/>
            <person name="Cruveiller S."/>
            <person name="Daubin V."/>
            <person name="Demange N."/>
            <person name="Francino M.P."/>
            <person name="Goltsman E."/>
            <person name="Huang Y."/>
            <person name="Kopp O.R."/>
            <person name="Labarre L."/>
            <person name="Lapidus A."/>
            <person name="Lavire C."/>
            <person name="Marechal J."/>
            <person name="Martinez M."/>
            <person name="Mastronunzio J.E."/>
            <person name="Mullin B.C."/>
            <person name="Niemann J."/>
            <person name="Pujic P."/>
            <person name="Rawnsley T."/>
            <person name="Rouy Z."/>
            <person name="Schenowitz C."/>
            <person name="Sellstedt A."/>
            <person name="Tavares F."/>
            <person name="Tomkins J.P."/>
            <person name="Vallenet D."/>
            <person name="Valverde C."/>
            <person name="Wall L.G."/>
            <person name="Wang Y."/>
            <person name="Medigue C."/>
            <person name="Benson D.R."/>
        </authorList>
    </citation>
    <scope>NUCLEOTIDE SEQUENCE [LARGE SCALE GENOMIC DNA]</scope>
    <source>
        <strain>DSM 45986 / CECT 9034 / ACN14a</strain>
    </source>
</reference>
<protein>
    <recommendedName>
        <fullName evidence="1">Translation initiation factor IF-1</fullName>
    </recommendedName>
</protein>